<proteinExistence type="inferred from homology"/>
<organism>
    <name type="scientific">Streptococcus thermophilus (strain CNRZ 1066)</name>
    <dbReference type="NCBI Taxonomy" id="299768"/>
    <lineage>
        <taxon>Bacteria</taxon>
        <taxon>Bacillati</taxon>
        <taxon>Bacillota</taxon>
        <taxon>Bacilli</taxon>
        <taxon>Lactobacillales</taxon>
        <taxon>Streptococcaceae</taxon>
        <taxon>Streptococcus</taxon>
    </lineage>
</organism>
<gene>
    <name evidence="1" type="primary">trmFO</name>
    <name type="synonym">gid</name>
    <name type="ordered locus">str0903</name>
</gene>
<name>TRMFO_STRT1</name>
<protein>
    <recommendedName>
        <fullName evidence="1">Methylenetetrahydrofolate--tRNA-(uracil-5-)-methyltransferase TrmFO</fullName>
        <ecNumber evidence="1">2.1.1.74</ecNumber>
    </recommendedName>
    <alternativeName>
        <fullName evidence="1">Folate-dependent tRNA (uracil-5-)-methyltransferase</fullName>
    </alternativeName>
    <alternativeName>
        <fullName evidence="1">Folate-dependent tRNA(M-5-U54)-methyltransferase</fullName>
    </alternativeName>
</protein>
<keyword id="KW-0963">Cytoplasm</keyword>
<keyword id="KW-0274">FAD</keyword>
<keyword id="KW-0285">Flavoprotein</keyword>
<keyword id="KW-0489">Methyltransferase</keyword>
<keyword id="KW-0520">NAD</keyword>
<keyword id="KW-0521">NADP</keyword>
<keyword id="KW-0808">Transferase</keyword>
<keyword id="KW-0819">tRNA processing</keyword>
<comment type="function">
    <text evidence="1">Catalyzes the folate-dependent formation of 5-methyl-uridine at position 54 (M-5-U54) in all tRNAs.</text>
</comment>
<comment type="catalytic activity">
    <reaction evidence="1">
        <text>uridine(54) in tRNA + (6R)-5,10-methylene-5,6,7,8-tetrahydrofolate + NADH + H(+) = 5-methyluridine(54) in tRNA + (6S)-5,6,7,8-tetrahydrofolate + NAD(+)</text>
        <dbReference type="Rhea" id="RHEA:16873"/>
        <dbReference type="Rhea" id="RHEA-COMP:10167"/>
        <dbReference type="Rhea" id="RHEA-COMP:10193"/>
        <dbReference type="ChEBI" id="CHEBI:15378"/>
        <dbReference type="ChEBI" id="CHEBI:15636"/>
        <dbReference type="ChEBI" id="CHEBI:57453"/>
        <dbReference type="ChEBI" id="CHEBI:57540"/>
        <dbReference type="ChEBI" id="CHEBI:57945"/>
        <dbReference type="ChEBI" id="CHEBI:65315"/>
        <dbReference type="ChEBI" id="CHEBI:74447"/>
        <dbReference type="EC" id="2.1.1.74"/>
    </reaction>
</comment>
<comment type="catalytic activity">
    <reaction evidence="1">
        <text>uridine(54) in tRNA + (6R)-5,10-methylene-5,6,7,8-tetrahydrofolate + NADPH + H(+) = 5-methyluridine(54) in tRNA + (6S)-5,6,7,8-tetrahydrofolate + NADP(+)</text>
        <dbReference type="Rhea" id="RHEA:62372"/>
        <dbReference type="Rhea" id="RHEA-COMP:10167"/>
        <dbReference type="Rhea" id="RHEA-COMP:10193"/>
        <dbReference type="ChEBI" id="CHEBI:15378"/>
        <dbReference type="ChEBI" id="CHEBI:15636"/>
        <dbReference type="ChEBI" id="CHEBI:57453"/>
        <dbReference type="ChEBI" id="CHEBI:57783"/>
        <dbReference type="ChEBI" id="CHEBI:58349"/>
        <dbReference type="ChEBI" id="CHEBI:65315"/>
        <dbReference type="ChEBI" id="CHEBI:74447"/>
        <dbReference type="EC" id="2.1.1.74"/>
    </reaction>
</comment>
<comment type="cofactor">
    <cofactor evidence="1">
        <name>FAD</name>
        <dbReference type="ChEBI" id="CHEBI:57692"/>
    </cofactor>
</comment>
<comment type="subcellular location">
    <subcellularLocation>
        <location evidence="1">Cytoplasm</location>
    </subcellularLocation>
</comment>
<comment type="similarity">
    <text evidence="1">Belongs to the MnmG family. TrmFO subfamily.</text>
</comment>
<feature type="chain" id="PRO_0000117279" description="Methylenetetrahydrofolate--tRNA-(uracil-5-)-methyltransferase TrmFO">
    <location>
        <begin position="1"/>
        <end position="447"/>
    </location>
</feature>
<feature type="binding site" evidence="1">
    <location>
        <begin position="13"/>
        <end position="18"/>
    </location>
    <ligand>
        <name>FAD</name>
        <dbReference type="ChEBI" id="CHEBI:57692"/>
    </ligand>
</feature>
<reference key="1">
    <citation type="journal article" date="2004" name="Nat. Biotechnol.">
        <title>Complete sequence and comparative genome analysis of the dairy bacterium Streptococcus thermophilus.</title>
        <authorList>
            <person name="Bolotin A."/>
            <person name="Quinquis B."/>
            <person name="Renault P."/>
            <person name="Sorokin A."/>
            <person name="Ehrlich S.D."/>
            <person name="Kulakauskas S."/>
            <person name="Lapidus A."/>
            <person name="Goltsman E."/>
            <person name="Mazur M."/>
            <person name="Pusch G.D."/>
            <person name="Fonstein M."/>
            <person name="Overbeek R."/>
            <person name="Kyprides N."/>
            <person name="Purnelle B."/>
            <person name="Prozzi D."/>
            <person name="Ngui K."/>
            <person name="Masuy D."/>
            <person name="Hancy F."/>
            <person name="Burteau S."/>
            <person name="Boutry M."/>
            <person name="Delcour J."/>
            <person name="Goffeau A."/>
            <person name="Hols P."/>
        </authorList>
    </citation>
    <scope>NUCLEOTIDE SEQUENCE [LARGE SCALE GENOMIC DNA]</scope>
    <source>
        <strain>CNRZ 1066</strain>
    </source>
</reference>
<dbReference type="EC" id="2.1.1.74" evidence="1"/>
<dbReference type="EMBL" id="CP000024">
    <property type="protein sequence ID" value="AAV62489.1"/>
    <property type="molecule type" value="Genomic_DNA"/>
</dbReference>
<dbReference type="RefSeq" id="WP_011227160.1">
    <property type="nucleotide sequence ID" value="NC_006449.1"/>
</dbReference>
<dbReference type="SMR" id="Q5M014"/>
<dbReference type="GeneID" id="66898774"/>
<dbReference type="KEGG" id="stc:str0903"/>
<dbReference type="HOGENOM" id="CLU_033057_1_0_9"/>
<dbReference type="GO" id="GO:0005829">
    <property type="term" value="C:cytosol"/>
    <property type="evidence" value="ECO:0007669"/>
    <property type="project" value="TreeGrafter"/>
</dbReference>
<dbReference type="GO" id="GO:0050660">
    <property type="term" value="F:flavin adenine dinucleotide binding"/>
    <property type="evidence" value="ECO:0007669"/>
    <property type="project" value="UniProtKB-UniRule"/>
</dbReference>
<dbReference type="GO" id="GO:0047151">
    <property type="term" value="F:tRNA (uracil(54)-C5)-methyltransferase activity, 5,10-methylenetetrahydrofolate-dependent"/>
    <property type="evidence" value="ECO:0007669"/>
    <property type="project" value="UniProtKB-UniRule"/>
</dbReference>
<dbReference type="GO" id="GO:0030488">
    <property type="term" value="P:tRNA methylation"/>
    <property type="evidence" value="ECO:0007669"/>
    <property type="project" value="TreeGrafter"/>
</dbReference>
<dbReference type="GO" id="GO:0002098">
    <property type="term" value="P:tRNA wobble uridine modification"/>
    <property type="evidence" value="ECO:0007669"/>
    <property type="project" value="TreeGrafter"/>
</dbReference>
<dbReference type="FunFam" id="3.50.50.60:FF:000035">
    <property type="entry name" value="Methylenetetrahydrofolate--tRNA-(uracil-5-)-methyltransferase TrmFO"/>
    <property type="match status" value="1"/>
</dbReference>
<dbReference type="FunFam" id="3.50.50.60:FF:000040">
    <property type="entry name" value="Methylenetetrahydrofolate--tRNA-(uracil-5-)-methyltransferase TrmFO"/>
    <property type="match status" value="1"/>
</dbReference>
<dbReference type="Gene3D" id="3.50.50.60">
    <property type="entry name" value="FAD/NAD(P)-binding domain"/>
    <property type="match status" value="2"/>
</dbReference>
<dbReference type="HAMAP" id="MF_01037">
    <property type="entry name" value="TrmFO"/>
    <property type="match status" value="1"/>
</dbReference>
<dbReference type="InterPro" id="IPR036188">
    <property type="entry name" value="FAD/NAD-bd_sf"/>
</dbReference>
<dbReference type="InterPro" id="IPR002218">
    <property type="entry name" value="MnmG-rel"/>
</dbReference>
<dbReference type="InterPro" id="IPR020595">
    <property type="entry name" value="MnmG-rel_CS"/>
</dbReference>
<dbReference type="InterPro" id="IPR040131">
    <property type="entry name" value="MnmG_N"/>
</dbReference>
<dbReference type="InterPro" id="IPR004417">
    <property type="entry name" value="TrmFO"/>
</dbReference>
<dbReference type="NCBIfam" id="TIGR00137">
    <property type="entry name" value="gid_trmFO"/>
    <property type="match status" value="1"/>
</dbReference>
<dbReference type="NCBIfam" id="NF003739">
    <property type="entry name" value="PRK05335.1"/>
    <property type="match status" value="1"/>
</dbReference>
<dbReference type="PANTHER" id="PTHR11806">
    <property type="entry name" value="GLUCOSE INHIBITED DIVISION PROTEIN A"/>
    <property type="match status" value="1"/>
</dbReference>
<dbReference type="PANTHER" id="PTHR11806:SF2">
    <property type="entry name" value="METHYLENETETRAHYDROFOLATE--TRNA-(URACIL-5-)-METHYLTRANSFERASE TRMFO"/>
    <property type="match status" value="1"/>
</dbReference>
<dbReference type="Pfam" id="PF01134">
    <property type="entry name" value="GIDA"/>
    <property type="match status" value="1"/>
</dbReference>
<dbReference type="SUPFAM" id="SSF51905">
    <property type="entry name" value="FAD/NAD(P)-binding domain"/>
    <property type="match status" value="1"/>
</dbReference>
<dbReference type="PROSITE" id="PS01281">
    <property type="entry name" value="GIDA_2"/>
    <property type="match status" value="1"/>
</dbReference>
<accession>Q5M014</accession>
<evidence type="ECO:0000255" key="1">
    <source>
        <dbReference type="HAMAP-Rule" id="MF_01037"/>
    </source>
</evidence>
<sequence>MSQSKADYINVIGAGLAGSEAAYQIAKRGIPVKLYEMRGVKATPQHKTTNFAELVCSNSFRGDSLTNAVGLLKEEMRRLDSIIMRNGEAHRVPAGGAMAVDREGYAEAVTAEIESHPLIEVIREEITEIPDDAITVIASGPLTSDALAEKIHELNGGDGFYFYDAAAPIVDKATIDMNKVYLKSRYDKGEAAYLNCPMTKEEFMAFYEALTTAEEAPLNSFEKEKYFEGCMPIEVMAKRGIKTMLYGPMKPVGLEYPEDYMGPRDGDFKTPYAVVQLRQDNAAGSLYNIVGFQTHLKWGEQKRVFQMIPGLENAEFVRYGVMHRNSYMDSPNLLKQTFQSKSNPNLFFAGQMTGVEGYVESAASGLVAGINAARLFKGEDEVIFPHTTAIGSLPYYVTHAESKHFQPMNVNFGIIKELEGPRIRDKKERYEKIAERALKDLQTFIDA</sequence>